<protein>
    <recommendedName>
        <fullName evidence="1">2-succinyl-5-enolpyruvyl-6-hydroxy-3-cyclohexene-1-carboxylate synthase</fullName>
        <shortName evidence="1">SEPHCHC synthase</shortName>
        <ecNumber evidence="1">2.2.1.9</ecNumber>
    </recommendedName>
    <alternativeName>
        <fullName evidence="1">Menaquinone biosynthesis protein MenD</fullName>
    </alternativeName>
</protein>
<organism>
    <name type="scientific">Chlorobium luteolum (strain DSM 273 / BCRC 81028 / 2530)</name>
    <name type="common">Pelodictyon luteolum</name>
    <dbReference type="NCBI Taxonomy" id="319225"/>
    <lineage>
        <taxon>Bacteria</taxon>
        <taxon>Pseudomonadati</taxon>
        <taxon>Chlorobiota</taxon>
        <taxon>Chlorobiia</taxon>
        <taxon>Chlorobiales</taxon>
        <taxon>Chlorobiaceae</taxon>
        <taxon>Chlorobium/Pelodictyon group</taxon>
        <taxon>Pelodictyon</taxon>
    </lineage>
</organism>
<comment type="function">
    <text evidence="1">Catalyzes the thiamine diphosphate-dependent decarboxylation of 2-oxoglutarate and the subsequent addition of the resulting succinic semialdehyde-thiamine pyrophosphate anion to isochorismate to yield 2-succinyl-5-enolpyruvyl-6-hydroxy-3-cyclohexene-1-carboxylate (SEPHCHC).</text>
</comment>
<comment type="catalytic activity">
    <reaction evidence="1">
        <text>isochorismate + 2-oxoglutarate + H(+) = 5-enolpyruvoyl-6-hydroxy-2-succinyl-cyclohex-3-ene-1-carboxylate + CO2</text>
        <dbReference type="Rhea" id="RHEA:25593"/>
        <dbReference type="ChEBI" id="CHEBI:15378"/>
        <dbReference type="ChEBI" id="CHEBI:16526"/>
        <dbReference type="ChEBI" id="CHEBI:16810"/>
        <dbReference type="ChEBI" id="CHEBI:29780"/>
        <dbReference type="ChEBI" id="CHEBI:58818"/>
        <dbReference type="EC" id="2.2.1.9"/>
    </reaction>
</comment>
<comment type="cofactor">
    <cofactor evidence="1">
        <name>Mg(2+)</name>
        <dbReference type="ChEBI" id="CHEBI:18420"/>
    </cofactor>
    <cofactor evidence="1">
        <name>Mn(2+)</name>
        <dbReference type="ChEBI" id="CHEBI:29035"/>
    </cofactor>
</comment>
<comment type="cofactor">
    <cofactor evidence="1">
        <name>thiamine diphosphate</name>
        <dbReference type="ChEBI" id="CHEBI:58937"/>
    </cofactor>
    <text evidence="1">Binds 1 thiamine pyrophosphate per subunit.</text>
</comment>
<comment type="pathway">
    <text evidence="1">Quinol/quinone metabolism; 1,4-dihydroxy-2-naphthoate biosynthesis; 1,4-dihydroxy-2-naphthoate from chorismate: step 2/7.</text>
</comment>
<comment type="pathway">
    <text evidence="1">Quinol/quinone metabolism; menaquinone biosynthesis.</text>
</comment>
<comment type="subunit">
    <text evidence="1">Homodimer.</text>
</comment>
<comment type="similarity">
    <text evidence="1">Belongs to the TPP enzyme family. MenD subfamily.</text>
</comment>
<sequence>MNNRQATTIWSAVLVEELIRQNASMFCISPGSRSTPLTAAVARNPRASWKMFPDERSAGFFALGHARATGRPAVLVCTSGTAVANYFPAVVEASADFVPMIVISADRPFDLQECGANQTIRQDGIFGRYARWHMQLPQPSTEIPLQSLLSTVEHAVAKSLGAPRGPVHLNQPFREPFDPEPLEGQDPWLEPLQAWKLDGRPRTSSAQPERRPDARAMATIRELLATARRPLLIAGSIPSPDDARAVASLADDLRIPLYADLSSGLRLTEGTLAWQQAFATPAFLGRFRPDLVVHFGGRLIARHPSAALKAWKPAHYVVIREHPERYAPDHPVSLSLESSLQTAAEGLMGCRSEPSAIKEPAEGFFLHCSGALDDLTEASIPLSEISAARQISQLITPGEALFTSNSMSVRELDSFAAALQPDGLPCGLNRGASGIDGIISTAAGYGEGLGRKVTLLIGDIAFLHDLNALSLLRSLSRPMRIVLLNNNGGGIFSFLPVASCNDIFEEHFATPQHFHAQHAAGMFGLRYAAPRTNREFEECFLAAGEAPQSTIIEIASSRSENVEQHRTLQARFNAFAETAFTDR</sequence>
<evidence type="ECO:0000255" key="1">
    <source>
        <dbReference type="HAMAP-Rule" id="MF_01659"/>
    </source>
</evidence>
<keyword id="KW-0460">Magnesium</keyword>
<keyword id="KW-0464">Manganese</keyword>
<keyword id="KW-0474">Menaquinone biosynthesis</keyword>
<keyword id="KW-0479">Metal-binding</keyword>
<keyword id="KW-1185">Reference proteome</keyword>
<keyword id="KW-0786">Thiamine pyrophosphate</keyword>
<keyword id="KW-0808">Transferase</keyword>
<feature type="chain" id="PRO_0000341794" description="2-succinyl-5-enolpyruvyl-6-hydroxy-3-cyclohexene-1-carboxylate synthase">
    <location>
        <begin position="1"/>
        <end position="583"/>
    </location>
</feature>
<gene>
    <name evidence="1" type="primary">menD</name>
    <name type="ordered locus">Plut_0331</name>
</gene>
<accession>Q3B612</accession>
<reference key="1">
    <citation type="submission" date="2005-08" db="EMBL/GenBank/DDBJ databases">
        <title>Complete sequence of Pelodictyon luteolum DSM 273.</title>
        <authorList>
            <consortium name="US DOE Joint Genome Institute"/>
            <person name="Copeland A."/>
            <person name="Lucas S."/>
            <person name="Lapidus A."/>
            <person name="Barry K."/>
            <person name="Detter J.C."/>
            <person name="Glavina T."/>
            <person name="Hammon N."/>
            <person name="Israni S."/>
            <person name="Pitluck S."/>
            <person name="Bryant D."/>
            <person name="Schmutz J."/>
            <person name="Larimer F."/>
            <person name="Land M."/>
            <person name="Kyrpides N."/>
            <person name="Ivanova N."/>
            <person name="Richardson P."/>
        </authorList>
    </citation>
    <scope>NUCLEOTIDE SEQUENCE [LARGE SCALE GENOMIC DNA]</scope>
    <source>
        <strain>DSM 273 / BCRC 81028 / 2530</strain>
    </source>
</reference>
<proteinExistence type="inferred from homology"/>
<name>MEND_CHLL3</name>
<dbReference type="EC" id="2.2.1.9" evidence="1"/>
<dbReference type="EMBL" id="CP000096">
    <property type="protein sequence ID" value="ABB23219.1"/>
    <property type="molecule type" value="Genomic_DNA"/>
</dbReference>
<dbReference type="RefSeq" id="WP_011357094.1">
    <property type="nucleotide sequence ID" value="NC_007512.1"/>
</dbReference>
<dbReference type="SMR" id="Q3B612"/>
<dbReference type="STRING" id="319225.Plut_0331"/>
<dbReference type="KEGG" id="plt:Plut_0331"/>
<dbReference type="eggNOG" id="COG1165">
    <property type="taxonomic scope" value="Bacteria"/>
</dbReference>
<dbReference type="HOGENOM" id="CLU_006051_3_0_10"/>
<dbReference type="OrthoDB" id="9791859at2"/>
<dbReference type="UniPathway" id="UPA00079"/>
<dbReference type="UniPathway" id="UPA01057">
    <property type="reaction ID" value="UER00164"/>
</dbReference>
<dbReference type="Proteomes" id="UP000002709">
    <property type="component" value="Chromosome"/>
</dbReference>
<dbReference type="GO" id="GO:0070204">
    <property type="term" value="F:2-succinyl-5-enolpyruvyl-6-hydroxy-3-cyclohexene-1-carboxylic-acid synthase activity"/>
    <property type="evidence" value="ECO:0007669"/>
    <property type="project" value="UniProtKB-UniRule"/>
</dbReference>
<dbReference type="GO" id="GO:0000287">
    <property type="term" value="F:magnesium ion binding"/>
    <property type="evidence" value="ECO:0007669"/>
    <property type="project" value="UniProtKB-UniRule"/>
</dbReference>
<dbReference type="GO" id="GO:0030145">
    <property type="term" value="F:manganese ion binding"/>
    <property type="evidence" value="ECO:0007669"/>
    <property type="project" value="UniProtKB-UniRule"/>
</dbReference>
<dbReference type="GO" id="GO:0030976">
    <property type="term" value="F:thiamine pyrophosphate binding"/>
    <property type="evidence" value="ECO:0007669"/>
    <property type="project" value="UniProtKB-UniRule"/>
</dbReference>
<dbReference type="GO" id="GO:0009234">
    <property type="term" value="P:menaquinone biosynthetic process"/>
    <property type="evidence" value="ECO:0007669"/>
    <property type="project" value="UniProtKB-UniRule"/>
</dbReference>
<dbReference type="CDD" id="cd07037">
    <property type="entry name" value="TPP_PYR_MenD"/>
    <property type="match status" value="1"/>
</dbReference>
<dbReference type="CDD" id="cd02009">
    <property type="entry name" value="TPP_SHCHC_synthase"/>
    <property type="match status" value="1"/>
</dbReference>
<dbReference type="Gene3D" id="3.40.50.970">
    <property type="match status" value="2"/>
</dbReference>
<dbReference type="Gene3D" id="3.40.50.1220">
    <property type="entry name" value="TPP-binding domain"/>
    <property type="match status" value="1"/>
</dbReference>
<dbReference type="HAMAP" id="MF_01659">
    <property type="entry name" value="MenD"/>
    <property type="match status" value="1"/>
</dbReference>
<dbReference type="InterPro" id="IPR029035">
    <property type="entry name" value="DHS-like_NAD/FAD-binding_dom"/>
</dbReference>
<dbReference type="InterPro" id="IPR004433">
    <property type="entry name" value="MenaQ_synth_MenD"/>
</dbReference>
<dbReference type="InterPro" id="IPR032264">
    <property type="entry name" value="MenD_middle"/>
</dbReference>
<dbReference type="InterPro" id="IPR029061">
    <property type="entry name" value="THDP-binding"/>
</dbReference>
<dbReference type="InterPro" id="IPR012001">
    <property type="entry name" value="Thiamin_PyroP_enz_TPP-bd_dom"/>
</dbReference>
<dbReference type="NCBIfam" id="TIGR00173">
    <property type="entry name" value="menD"/>
    <property type="match status" value="1"/>
</dbReference>
<dbReference type="PANTHER" id="PTHR42916">
    <property type="entry name" value="2-SUCCINYL-5-ENOLPYRUVYL-6-HYDROXY-3-CYCLOHEXENE-1-CARBOXYLATE SYNTHASE"/>
    <property type="match status" value="1"/>
</dbReference>
<dbReference type="PANTHER" id="PTHR42916:SF1">
    <property type="entry name" value="PROTEIN PHYLLO, CHLOROPLASTIC"/>
    <property type="match status" value="1"/>
</dbReference>
<dbReference type="Pfam" id="PF16582">
    <property type="entry name" value="TPP_enzyme_M_2"/>
    <property type="match status" value="1"/>
</dbReference>
<dbReference type="Pfam" id="PF02776">
    <property type="entry name" value="TPP_enzyme_N"/>
    <property type="match status" value="1"/>
</dbReference>
<dbReference type="PIRSF" id="PIRSF004983">
    <property type="entry name" value="MenD"/>
    <property type="match status" value="1"/>
</dbReference>
<dbReference type="SUPFAM" id="SSF52467">
    <property type="entry name" value="DHS-like NAD/FAD-binding domain"/>
    <property type="match status" value="1"/>
</dbReference>
<dbReference type="SUPFAM" id="SSF52518">
    <property type="entry name" value="Thiamin diphosphate-binding fold (THDP-binding)"/>
    <property type="match status" value="2"/>
</dbReference>